<keyword id="KW-0560">Oxidoreductase</keyword>
<keyword id="KW-1185">Reference proteome</keyword>
<name>YHBW_ECOLI</name>
<sequence>MTDKTIAFSLLDLAPIPEGSSAREAFSHSLDLARLAEKRGYHRYWLAEHHNMTGIASAATSVLIGYLAANTTTLHLGSGGVMLPNHSPLVIAEQFGTLNTLYPGRIDLGLGRAPGSDQRTMMALRRHMSGDIDNFPRDVAELVDWFDARDPNPHVRPVPGYGEKIPVWLLGSSLYSAQLAAQLGLPFAFASHFAPDMLFQALHLYRSNFKPSARLEKPYAMVCINIIAADSNRDAEFLFTSMQQAFVKLRRGETGQLPPPIQNMDQFWSPSEQYGVQQALSMSLVGDKAKVRHGLQSILRETDADEIMVNGQIFDHQARLHSFELAMDVKEELLG</sequence>
<accession>P0ADV5</accession>
<accession>P45529</accession>
<accession>Q2M950</accession>
<dbReference type="EMBL" id="U18997">
    <property type="protein sequence ID" value="AAA57963.1"/>
    <property type="molecule type" value="Genomic_DNA"/>
</dbReference>
<dbReference type="EMBL" id="U00096">
    <property type="protein sequence ID" value="AAC76194.1"/>
    <property type="molecule type" value="Genomic_DNA"/>
</dbReference>
<dbReference type="EMBL" id="AP009048">
    <property type="protein sequence ID" value="BAE77206.1"/>
    <property type="molecule type" value="Genomic_DNA"/>
</dbReference>
<dbReference type="EMBL" id="M58338">
    <property type="status" value="NOT_ANNOTATED_CDS"/>
    <property type="molecule type" value="Genomic_DNA"/>
</dbReference>
<dbReference type="PIR" id="D65106">
    <property type="entry name" value="D65106"/>
</dbReference>
<dbReference type="RefSeq" id="NP_417629.1">
    <property type="nucleotide sequence ID" value="NC_000913.3"/>
</dbReference>
<dbReference type="RefSeq" id="WP_000130380.1">
    <property type="nucleotide sequence ID" value="NZ_LN832404.1"/>
</dbReference>
<dbReference type="SMR" id="P0ADV5"/>
<dbReference type="BioGRID" id="4259277">
    <property type="interactions" value="24"/>
</dbReference>
<dbReference type="BioGRID" id="851990">
    <property type="interactions" value="1"/>
</dbReference>
<dbReference type="DIP" id="DIP-48197N"/>
<dbReference type="FunCoup" id="P0ADV5">
    <property type="interactions" value="382"/>
</dbReference>
<dbReference type="IntAct" id="P0ADV5">
    <property type="interactions" value="3"/>
</dbReference>
<dbReference type="STRING" id="511145.b3160"/>
<dbReference type="jPOST" id="P0ADV5"/>
<dbReference type="PaxDb" id="511145-b3160"/>
<dbReference type="EnsemblBacteria" id="AAC76194">
    <property type="protein sequence ID" value="AAC76194"/>
    <property type="gene ID" value="b3160"/>
</dbReference>
<dbReference type="GeneID" id="947677"/>
<dbReference type="KEGG" id="ecj:JW3129"/>
<dbReference type="KEGG" id="eco:b3160"/>
<dbReference type="KEGG" id="ecoc:C3026_17210"/>
<dbReference type="PATRIC" id="fig|1411691.4.peg.3570"/>
<dbReference type="EchoBASE" id="EB2644"/>
<dbReference type="eggNOG" id="COG2141">
    <property type="taxonomic scope" value="Bacteria"/>
</dbReference>
<dbReference type="HOGENOM" id="CLU_027853_9_1_6"/>
<dbReference type="InParanoid" id="P0ADV5"/>
<dbReference type="OMA" id="PRYMHEA"/>
<dbReference type="OrthoDB" id="9780518at2"/>
<dbReference type="PhylomeDB" id="P0ADV5"/>
<dbReference type="BioCyc" id="EcoCyc:G7654-MONOMER"/>
<dbReference type="PRO" id="PR:P0ADV5"/>
<dbReference type="Proteomes" id="UP000000625">
    <property type="component" value="Chromosome"/>
</dbReference>
<dbReference type="GO" id="GO:0005829">
    <property type="term" value="C:cytosol"/>
    <property type="evidence" value="ECO:0000314"/>
    <property type="project" value="EcoCyc"/>
</dbReference>
<dbReference type="GO" id="GO:0016705">
    <property type="term" value="F:oxidoreductase activity, acting on paired donors, with incorporation or reduction of molecular oxygen"/>
    <property type="evidence" value="ECO:0007669"/>
    <property type="project" value="InterPro"/>
</dbReference>
<dbReference type="FunFam" id="3.20.20.30:FF:000002">
    <property type="entry name" value="LLM class flavin-dependent oxidoreductase"/>
    <property type="match status" value="1"/>
</dbReference>
<dbReference type="Gene3D" id="3.20.20.30">
    <property type="entry name" value="Luciferase-like domain"/>
    <property type="match status" value="1"/>
</dbReference>
<dbReference type="InterPro" id="IPR050766">
    <property type="entry name" value="Bact_Lucif_Oxidored"/>
</dbReference>
<dbReference type="InterPro" id="IPR019949">
    <property type="entry name" value="CmoO-like"/>
</dbReference>
<dbReference type="InterPro" id="IPR011251">
    <property type="entry name" value="Luciferase-like_dom"/>
</dbReference>
<dbReference type="InterPro" id="IPR036661">
    <property type="entry name" value="Luciferase-like_sf"/>
</dbReference>
<dbReference type="NCBIfam" id="TIGR03558">
    <property type="entry name" value="oxido_grp_1"/>
    <property type="match status" value="1"/>
</dbReference>
<dbReference type="NCBIfam" id="NF007802">
    <property type="entry name" value="PRK10508.1"/>
    <property type="match status" value="1"/>
</dbReference>
<dbReference type="PANTHER" id="PTHR30137">
    <property type="entry name" value="LUCIFERASE-LIKE MONOOXYGENASE"/>
    <property type="match status" value="1"/>
</dbReference>
<dbReference type="PANTHER" id="PTHR30137:SF6">
    <property type="entry name" value="LUCIFERASE-LIKE MONOOXYGENASE"/>
    <property type="match status" value="1"/>
</dbReference>
<dbReference type="Pfam" id="PF00296">
    <property type="entry name" value="Bac_luciferase"/>
    <property type="match status" value="1"/>
</dbReference>
<dbReference type="SUPFAM" id="SSF51679">
    <property type="entry name" value="Bacterial luciferase-like"/>
    <property type="match status" value="1"/>
</dbReference>
<feature type="chain" id="PRO_0000169460" description="Luciferase-like monooxygenase">
    <location>
        <begin position="1"/>
        <end position="335"/>
    </location>
</feature>
<evidence type="ECO:0000305" key="1"/>
<protein>
    <recommendedName>
        <fullName>Luciferase-like monooxygenase</fullName>
    </recommendedName>
</protein>
<gene>
    <name type="primary">yhbW</name>
    <name type="ordered locus">b3160</name>
    <name type="ordered locus">JW3129</name>
</gene>
<comment type="similarity">
    <text evidence="1">To bacterial alkanal monooxygenase alpha and beta chains.</text>
</comment>
<comment type="sequence caution" evidence="1">
    <conflict type="frameshift">
        <sequence resource="EMBL" id="M58338"/>
    </conflict>
</comment>
<proteinExistence type="predicted"/>
<organism>
    <name type="scientific">Escherichia coli (strain K12)</name>
    <dbReference type="NCBI Taxonomy" id="83333"/>
    <lineage>
        <taxon>Bacteria</taxon>
        <taxon>Pseudomonadati</taxon>
        <taxon>Pseudomonadota</taxon>
        <taxon>Gammaproteobacteria</taxon>
        <taxon>Enterobacterales</taxon>
        <taxon>Enterobacteriaceae</taxon>
        <taxon>Escherichia</taxon>
    </lineage>
</organism>
<reference key="1">
    <citation type="journal article" date="1997" name="Science">
        <title>The complete genome sequence of Escherichia coli K-12.</title>
        <authorList>
            <person name="Blattner F.R."/>
            <person name="Plunkett G. III"/>
            <person name="Bloch C.A."/>
            <person name="Perna N.T."/>
            <person name="Burland V."/>
            <person name="Riley M."/>
            <person name="Collado-Vides J."/>
            <person name="Glasner J.D."/>
            <person name="Rode C.K."/>
            <person name="Mayhew G.F."/>
            <person name="Gregor J."/>
            <person name="Davis N.W."/>
            <person name="Kirkpatrick H.A."/>
            <person name="Goeden M.A."/>
            <person name="Rose D.J."/>
            <person name="Mau B."/>
            <person name="Shao Y."/>
        </authorList>
    </citation>
    <scope>NUCLEOTIDE SEQUENCE [LARGE SCALE GENOMIC DNA]</scope>
    <source>
        <strain>K12 / MG1655 / ATCC 47076</strain>
    </source>
</reference>
<reference key="2">
    <citation type="journal article" date="2006" name="Mol. Syst. Biol.">
        <title>Highly accurate genome sequences of Escherichia coli K-12 strains MG1655 and W3110.</title>
        <authorList>
            <person name="Hayashi K."/>
            <person name="Morooka N."/>
            <person name="Yamamoto Y."/>
            <person name="Fujita K."/>
            <person name="Isono K."/>
            <person name="Choi S."/>
            <person name="Ohtsubo E."/>
            <person name="Baba T."/>
            <person name="Wanner B.L."/>
            <person name="Mori H."/>
            <person name="Horiuchi T."/>
        </authorList>
    </citation>
    <scope>NUCLEOTIDE SEQUENCE [LARGE SCALE GENOMIC DNA]</scope>
    <source>
        <strain>K12 / W3110 / ATCC 27325 / DSM 5911</strain>
    </source>
</reference>
<reference key="3">
    <citation type="journal article" date="1991" name="J. Bacteriol.">
        <title>Regulation of expression of the Escherichia coli K-12 mtr gene by TyrR protein and Trp repressor.</title>
        <authorList>
            <person name="Sarsero J.P."/>
            <person name="Wookey P.J."/>
            <person name="Pittard A.J."/>
        </authorList>
    </citation>
    <scope>NUCLEOTIDE SEQUENCE [GENOMIC DNA] OF 158-335</scope>
    <source>
        <strain>K12</strain>
    </source>
</reference>